<dbReference type="EC" id="2.8.1.6" evidence="1"/>
<dbReference type="EMBL" id="CP000538">
    <property type="protein sequence ID" value="EAQ72805.1"/>
    <property type="molecule type" value="Genomic_DNA"/>
</dbReference>
<dbReference type="RefSeq" id="WP_002869287.1">
    <property type="nucleotide sequence ID" value="NC_008787.1"/>
</dbReference>
<dbReference type="SMR" id="A1W1T3"/>
<dbReference type="KEGG" id="cjj:CJJ81176_1677"/>
<dbReference type="eggNOG" id="COG0502">
    <property type="taxonomic scope" value="Bacteria"/>
</dbReference>
<dbReference type="HOGENOM" id="CLU_033172_2_1_7"/>
<dbReference type="UniPathway" id="UPA00078">
    <property type="reaction ID" value="UER00162"/>
</dbReference>
<dbReference type="Proteomes" id="UP000000646">
    <property type="component" value="Chromosome"/>
</dbReference>
<dbReference type="GO" id="GO:0051537">
    <property type="term" value="F:2 iron, 2 sulfur cluster binding"/>
    <property type="evidence" value="ECO:0007669"/>
    <property type="project" value="UniProtKB-KW"/>
</dbReference>
<dbReference type="GO" id="GO:0051539">
    <property type="term" value="F:4 iron, 4 sulfur cluster binding"/>
    <property type="evidence" value="ECO:0007669"/>
    <property type="project" value="UniProtKB-KW"/>
</dbReference>
<dbReference type="GO" id="GO:0004076">
    <property type="term" value="F:biotin synthase activity"/>
    <property type="evidence" value="ECO:0007669"/>
    <property type="project" value="UniProtKB-UniRule"/>
</dbReference>
<dbReference type="GO" id="GO:0005506">
    <property type="term" value="F:iron ion binding"/>
    <property type="evidence" value="ECO:0007669"/>
    <property type="project" value="UniProtKB-UniRule"/>
</dbReference>
<dbReference type="GO" id="GO:0009102">
    <property type="term" value="P:biotin biosynthetic process"/>
    <property type="evidence" value="ECO:0007669"/>
    <property type="project" value="UniProtKB-UniRule"/>
</dbReference>
<dbReference type="CDD" id="cd01335">
    <property type="entry name" value="Radical_SAM"/>
    <property type="match status" value="1"/>
</dbReference>
<dbReference type="Gene3D" id="3.20.20.70">
    <property type="entry name" value="Aldolase class I"/>
    <property type="match status" value="1"/>
</dbReference>
<dbReference type="HAMAP" id="MF_01694">
    <property type="entry name" value="BioB"/>
    <property type="match status" value="1"/>
</dbReference>
<dbReference type="InterPro" id="IPR013785">
    <property type="entry name" value="Aldolase_TIM"/>
</dbReference>
<dbReference type="InterPro" id="IPR010722">
    <property type="entry name" value="BATS_dom"/>
</dbReference>
<dbReference type="InterPro" id="IPR002684">
    <property type="entry name" value="Biotin_synth/BioAB"/>
</dbReference>
<dbReference type="InterPro" id="IPR024177">
    <property type="entry name" value="Biotin_synthase"/>
</dbReference>
<dbReference type="InterPro" id="IPR006638">
    <property type="entry name" value="Elp3/MiaA/NifB-like_rSAM"/>
</dbReference>
<dbReference type="InterPro" id="IPR007197">
    <property type="entry name" value="rSAM"/>
</dbReference>
<dbReference type="NCBIfam" id="TIGR00433">
    <property type="entry name" value="bioB"/>
    <property type="match status" value="1"/>
</dbReference>
<dbReference type="NCBIfam" id="NF006308">
    <property type="entry name" value="PRK08508.1"/>
    <property type="match status" value="1"/>
</dbReference>
<dbReference type="PANTHER" id="PTHR22976">
    <property type="entry name" value="BIOTIN SYNTHASE"/>
    <property type="match status" value="1"/>
</dbReference>
<dbReference type="PANTHER" id="PTHR22976:SF2">
    <property type="entry name" value="BIOTIN SYNTHASE, MITOCHONDRIAL"/>
    <property type="match status" value="1"/>
</dbReference>
<dbReference type="Pfam" id="PF06968">
    <property type="entry name" value="BATS"/>
    <property type="match status" value="1"/>
</dbReference>
<dbReference type="Pfam" id="PF04055">
    <property type="entry name" value="Radical_SAM"/>
    <property type="match status" value="1"/>
</dbReference>
<dbReference type="PIRSF" id="PIRSF001619">
    <property type="entry name" value="Biotin_synth"/>
    <property type="match status" value="1"/>
</dbReference>
<dbReference type="SFLD" id="SFLDG01060">
    <property type="entry name" value="BATS_domain_containing"/>
    <property type="match status" value="1"/>
</dbReference>
<dbReference type="SFLD" id="SFLDG01278">
    <property type="entry name" value="biotin_synthase_like"/>
    <property type="match status" value="1"/>
</dbReference>
<dbReference type="SMART" id="SM00876">
    <property type="entry name" value="BATS"/>
    <property type="match status" value="1"/>
</dbReference>
<dbReference type="SMART" id="SM00729">
    <property type="entry name" value="Elp3"/>
    <property type="match status" value="1"/>
</dbReference>
<dbReference type="SUPFAM" id="SSF102114">
    <property type="entry name" value="Radical SAM enzymes"/>
    <property type="match status" value="1"/>
</dbReference>
<dbReference type="PROSITE" id="PS51918">
    <property type="entry name" value="RADICAL_SAM"/>
    <property type="match status" value="1"/>
</dbReference>
<reference key="1">
    <citation type="submission" date="2006-12" db="EMBL/GenBank/DDBJ databases">
        <authorList>
            <person name="Fouts D.E."/>
            <person name="Nelson K.E."/>
            <person name="Sebastian Y."/>
        </authorList>
    </citation>
    <scope>NUCLEOTIDE SEQUENCE [LARGE SCALE GENOMIC DNA]</scope>
    <source>
        <strain>81-176</strain>
    </source>
</reference>
<evidence type="ECO:0000255" key="1">
    <source>
        <dbReference type="HAMAP-Rule" id="MF_01694"/>
    </source>
</evidence>
<evidence type="ECO:0000255" key="2">
    <source>
        <dbReference type="PROSITE-ProRule" id="PRU01266"/>
    </source>
</evidence>
<proteinExistence type="inferred from homology"/>
<comment type="function">
    <text evidence="1">Catalyzes the conversion of dethiobiotin (DTB) to biotin by the insertion of a sulfur atom into dethiobiotin via a radical-based mechanism.</text>
</comment>
<comment type="catalytic activity">
    <reaction evidence="1">
        <text>(4R,5S)-dethiobiotin + (sulfur carrier)-SH + 2 reduced [2Fe-2S]-[ferredoxin] + 2 S-adenosyl-L-methionine = (sulfur carrier)-H + biotin + 2 5'-deoxyadenosine + 2 L-methionine + 2 oxidized [2Fe-2S]-[ferredoxin]</text>
        <dbReference type="Rhea" id="RHEA:22060"/>
        <dbReference type="Rhea" id="RHEA-COMP:10000"/>
        <dbReference type="Rhea" id="RHEA-COMP:10001"/>
        <dbReference type="Rhea" id="RHEA-COMP:14737"/>
        <dbReference type="Rhea" id="RHEA-COMP:14739"/>
        <dbReference type="ChEBI" id="CHEBI:17319"/>
        <dbReference type="ChEBI" id="CHEBI:29917"/>
        <dbReference type="ChEBI" id="CHEBI:33737"/>
        <dbReference type="ChEBI" id="CHEBI:33738"/>
        <dbReference type="ChEBI" id="CHEBI:57586"/>
        <dbReference type="ChEBI" id="CHEBI:57844"/>
        <dbReference type="ChEBI" id="CHEBI:59789"/>
        <dbReference type="ChEBI" id="CHEBI:64428"/>
        <dbReference type="ChEBI" id="CHEBI:149473"/>
        <dbReference type="EC" id="2.8.1.6"/>
    </reaction>
</comment>
<comment type="cofactor">
    <cofactor evidence="1">
        <name>[4Fe-4S] cluster</name>
        <dbReference type="ChEBI" id="CHEBI:49883"/>
    </cofactor>
    <text evidence="1">Binds 1 [4Fe-4S] cluster. The cluster is coordinated with 3 cysteines and an exchangeable S-adenosyl-L-methionine.</text>
</comment>
<comment type="cofactor">
    <cofactor evidence="1">
        <name>[2Fe-2S] cluster</name>
        <dbReference type="ChEBI" id="CHEBI:190135"/>
    </cofactor>
    <text evidence="1">Binds 1 [2Fe-2S] cluster. The cluster is coordinated with 3 cysteines and 1 arginine.</text>
</comment>
<comment type="pathway">
    <text evidence="1">Cofactor biosynthesis; biotin biosynthesis; biotin from 7,8-diaminononanoate: step 2/2.</text>
</comment>
<comment type="subunit">
    <text evidence="1">Homodimer.</text>
</comment>
<comment type="similarity">
    <text evidence="1">Belongs to the radical SAM superfamily. Biotin synthase family.</text>
</comment>
<protein>
    <recommendedName>
        <fullName evidence="1">Biotin synthase</fullName>
        <ecNumber evidence="1">2.8.1.6</ecNumber>
    </recommendedName>
</protein>
<keyword id="KW-0001">2Fe-2S</keyword>
<keyword id="KW-0004">4Fe-4S</keyword>
<keyword id="KW-0093">Biotin biosynthesis</keyword>
<keyword id="KW-0408">Iron</keyword>
<keyword id="KW-0411">Iron-sulfur</keyword>
<keyword id="KW-0479">Metal-binding</keyword>
<keyword id="KW-0949">S-adenosyl-L-methionine</keyword>
<keyword id="KW-0808">Transferase</keyword>
<feature type="chain" id="PRO_0000381287" description="Biotin synthase">
    <location>
        <begin position="1"/>
        <end position="278"/>
    </location>
</feature>
<feature type="domain" description="Radical SAM core" evidence="2">
    <location>
        <begin position="1"/>
        <end position="227"/>
    </location>
</feature>
<feature type="binding site" evidence="1">
    <location>
        <position position="16"/>
    </location>
    <ligand>
        <name>[4Fe-4S] cluster</name>
        <dbReference type="ChEBI" id="CHEBI:49883"/>
        <note>4Fe-4S-S-AdoMet</note>
    </ligand>
</feature>
<feature type="binding site" evidence="1">
    <location>
        <position position="20"/>
    </location>
    <ligand>
        <name>[4Fe-4S] cluster</name>
        <dbReference type="ChEBI" id="CHEBI:49883"/>
        <note>4Fe-4S-S-AdoMet</note>
    </ligand>
</feature>
<feature type="binding site" evidence="1">
    <location>
        <position position="23"/>
    </location>
    <ligand>
        <name>[4Fe-4S] cluster</name>
        <dbReference type="ChEBI" id="CHEBI:49883"/>
        <note>4Fe-4S-S-AdoMet</note>
    </ligand>
</feature>
<feature type="binding site" evidence="1">
    <location>
        <position position="60"/>
    </location>
    <ligand>
        <name>[2Fe-2S] cluster</name>
        <dbReference type="ChEBI" id="CHEBI:190135"/>
    </ligand>
</feature>
<feature type="binding site" evidence="1">
    <location>
        <position position="95"/>
    </location>
    <ligand>
        <name>[2Fe-2S] cluster</name>
        <dbReference type="ChEBI" id="CHEBI:190135"/>
    </ligand>
</feature>
<feature type="binding site" evidence="1">
    <location>
        <position position="153"/>
    </location>
    <ligand>
        <name>[2Fe-2S] cluster</name>
        <dbReference type="ChEBI" id="CHEBI:190135"/>
    </ligand>
</feature>
<accession>A1W1T3</accession>
<sequence>MQIMLCAISNIASGNCSEDCKYCTQSAHVKTDIQKYRRKELSQIVLEAKMAKKNEALGFCLVTAGLGLDDEKLEYVCEAAKAVQKEVPNLLLIACNGMASVEQLKELKKAGIFSYNHNLETSKEFFPQICTTHTWESRFQTNLNAKEAGLMLCCGGIYGMGESEEDRLSFRKSLQELQPFSTPINFFIANENLKLQVPRLNADEALKIVRDTKEALPQSVVMVAGGREVVLRERQYEIFQAGAGAIVIGDYLTTKGEEPSQDIIKLKEMGFTFASECH</sequence>
<organism>
    <name type="scientific">Campylobacter jejuni subsp. jejuni serotype O:23/36 (strain 81-176)</name>
    <dbReference type="NCBI Taxonomy" id="354242"/>
    <lineage>
        <taxon>Bacteria</taxon>
        <taxon>Pseudomonadati</taxon>
        <taxon>Campylobacterota</taxon>
        <taxon>Epsilonproteobacteria</taxon>
        <taxon>Campylobacterales</taxon>
        <taxon>Campylobacteraceae</taxon>
        <taxon>Campylobacter</taxon>
    </lineage>
</organism>
<name>BIOB_CAMJJ</name>
<gene>
    <name evidence="1" type="primary">bioB</name>
    <name type="ordered locus">CJJ81176_1677</name>
</gene>